<reference key="1">
    <citation type="journal article" date="2007" name="Proc. Natl. Acad. Sci. U.S.A.">
        <title>Genome and proteome of long-chain alkane degrading Geobacillus thermodenitrificans NG80-2 isolated from a deep-subsurface oil reservoir.</title>
        <authorList>
            <person name="Feng L."/>
            <person name="Wang W."/>
            <person name="Cheng J."/>
            <person name="Ren Y."/>
            <person name="Zhao G."/>
            <person name="Gao C."/>
            <person name="Tang Y."/>
            <person name="Liu X."/>
            <person name="Han W."/>
            <person name="Peng X."/>
            <person name="Liu R."/>
            <person name="Wang L."/>
        </authorList>
    </citation>
    <scope>NUCLEOTIDE SEQUENCE [LARGE SCALE GENOMIC DNA]</scope>
    <source>
        <strain>NG80-2</strain>
    </source>
</reference>
<keyword id="KW-0963">Cytoplasm</keyword>
<keyword id="KW-0456">Lyase</keyword>
<keyword id="KW-0704">Schiff base</keyword>
<accession>A4IR26</accession>
<protein>
    <recommendedName>
        <fullName evidence="1">Deoxyribose-phosphate aldolase</fullName>
        <shortName evidence="1">DERA</shortName>
        <ecNumber evidence="1">4.1.2.4</ecNumber>
    </recommendedName>
    <alternativeName>
        <fullName evidence="1">2-deoxy-D-ribose 5-phosphate aldolase</fullName>
    </alternativeName>
    <alternativeName>
        <fullName evidence="1">Phosphodeoxyriboaldolase</fullName>
        <shortName evidence="1">Deoxyriboaldolase</shortName>
    </alternativeName>
</protein>
<gene>
    <name evidence="1" type="primary">deoC</name>
    <name type="ordered locus">GTNG_2435</name>
</gene>
<feature type="chain" id="PRO_1000015316" description="Deoxyribose-phosphate aldolase">
    <location>
        <begin position="1"/>
        <end position="223"/>
    </location>
</feature>
<feature type="active site" description="Proton donor/acceptor" evidence="1">
    <location>
        <position position="91"/>
    </location>
</feature>
<feature type="active site" description="Schiff-base intermediate with acetaldehyde" evidence="1">
    <location>
        <position position="154"/>
    </location>
</feature>
<feature type="active site" description="Proton donor/acceptor" evidence="1">
    <location>
        <position position="183"/>
    </location>
</feature>
<organism>
    <name type="scientific">Geobacillus thermodenitrificans (strain NG80-2)</name>
    <dbReference type="NCBI Taxonomy" id="420246"/>
    <lineage>
        <taxon>Bacteria</taxon>
        <taxon>Bacillati</taxon>
        <taxon>Bacillota</taxon>
        <taxon>Bacilli</taxon>
        <taxon>Bacillales</taxon>
        <taxon>Anoxybacillaceae</taxon>
        <taxon>Geobacillus</taxon>
    </lineage>
</organism>
<name>DEOC_GEOTN</name>
<sequence>MTVNIAKMIDHTLLKPEATEEQIIQLCDEAKQHGFASVCVNPAWVKTAARELSDTDVRVCTVIGFPLGATTPETKAFETNNAIENGAREVDMVINIGALKSGNDELVERDIRAVVEAASGKALVKVIIETALLTDEEKVRACQLAVKAGADYVKTSTGFSGGGATVEDVALMRRTVGDKAGVKASGGVRDRKTAEAMIEAGATRIGTSSGVAIVSGQTGGADY</sequence>
<proteinExistence type="inferred from homology"/>
<evidence type="ECO:0000255" key="1">
    <source>
        <dbReference type="HAMAP-Rule" id="MF_00114"/>
    </source>
</evidence>
<comment type="function">
    <text evidence="1">Catalyzes a reversible aldol reaction between acetaldehyde and D-glyceraldehyde 3-phosphate to generate 2-deoxy-D-ribose 5-phosphate.</text>
</comment>
<comment type="catalytic activity">
    <reaction evidence="1">
        <text>2-deoxy-D-ribose 5-phosphate = D-glyceraldehyde 3-phosphate + acetaldehyde</text>
        <dbReference type="Rhea" id="RHEA:12821"/>
        <dbReference type="ChEBI" id="CHEBI:15343"/>
        <dbReference type="ChEBI" id="CHEBI:59776"/>
        <dbReference type="ChEBI" id="CHEBI:62877"/>
        <dbReference type="EC" id="4.1.2.4"/>
    </reaction>
</comment>
<comment type="pathway">
    <text evidence="1">Carbohydrate degradation; 2-deoxy-D-ribose 1-phosphate degradation; D-glyceraldehyde 3-phosphate and acetaldehyde from 2-deoxy-alpha-D-ribose 1-phosphate: step 2/2.</text>
</comment>
<comment type="subcellular location">
    <subcellularLocation>
        <location evidence="1">Cytoplasm</location>
    </subcellularLocation>
</comment>
<comment type="similarity">
    <text evidence="1">Belongs to the DeoC/FbaB aldolase family. DeoC type 1 subfamily.</text>
</comment>
<dbReference type="EC" id="4.1.2.4" evidence="1"/>
<dbReference type="EMBL" id="CP000557">
    <property type="protein sequence ID" value="ABO67780.1"/>
    <property type="molecule type" value="Genomic_DNA"/>
</dbReference>
<dbReference type="RefSeq" id="WP_008879914.1">
    <property type="nucleotide sequence ID" value="NC_009328.1"/>
</dbReference>
<dbReference type="SMR" id="A4IR26"/>
<dbReference type="KEGG" id="gtn:GTNG_2435"/>
<dbReference type="eggNOG" id="COG0274">
    <property type="taxonomic scope" value="Bacteria"/>
</dbReference>
<dbReference type="HOGENOM" id="CLU_053595_0_1_9"/>
<dbReference type="UniPathway" id="UPA00002">
    <property type="reaction ID" value="UER00468"/>
</dbReference>
<dbReference type="Proteomes" id="UP000001578">
    <property type="component" value="Chromosome"/>
</dbReference>
<dbReference type="GO" id="GO:0005737">
    <property type="term" value="C:cytoplasm"/>
    <property type="evidence" value="ECO:0007669"/>
    <property type="project" value="UniProtKB-SubCell"/>
</dbReference>
<dbReference type="GO" id="GO:0004139">
    <property type="term" value="F:deoxyribose-phosphate aldolase activity"/>
    <property type="evidence" value="ECO:0007669"/>
    <property type="project" value="UniProtKB-UniRule"/>
</dbReference>
<dbReference type="GO" id="GO:0006018">
    <property type="term" value="P:2-deoxyribose 1-phosphate catabolic process"/>
    <property type="evidence" value="ECO:0007669"/>
    <property type="project" value="UniProtKB-UniRule"/>
</dbReference>
<dbReference type="GO" id="GO:0016052">
    <property type="term" value="P:carbohydrate catabolic process"/>
    <property type="evidence" value="ECO:0007669"/>
    <property type="project" value="TreeGrafter"/>
</dbReference>
<dbReference type="GO" id="GO:0009264">
    <property type="term" value="P:deoxyribonucleotide catabolic process"/>
    <property type="evidence" value="ECO:0007669"/>
    <property type="project" value="InterPro"/>
</dbReference>
<dbReference type="CDD" id="cd00959">
    <property type="entry name" value="DeoC"/>
    <property type="match status" value="1"/>
</dbReference>
<dbReference type="FunFam" id="3.20.20.70:FF:000044">
    <property type="entry name" value="Deoxyribose-phosphate aldolase"/>
    <property type="match status" value="1"/>
</dbReference>
<dbReference type="Gene3D" id="3.20.20.70">
    <property type="entry name" value="Aldolase class I"/>
    <property type="match status" value="1"/>
</dbReference>
<dbReference type="HAMAP" id="MF_00114">
    <property type="entry name" value="DeoC_type1"/>
    <property type="match status" value="1"/>
</dbReference>
<dbReference type="InterPro" id="IPR013785">
    <property type="entry name" value="Aldolase_TIM"/>
</dbReference>
<dbReference type="InterPro" id="IPR011343">
    <property type="entry name" value="DeoC"/>
</dbReference>
<dbReference type="InterPro" id="IPR002915">
    <property type="entry name" value="DeoC/FbaB/LacD_aldolase"/>
</dbReference>
<dbReference type="InterPro" id="IPR028581">
    <property type="entry name" value="DeoC_typeI"/>
</dbReference>
<dbReference type="NCBIfam" id="TIGR00126">
    <property type="entry name" value="deoC"/>
    <property type="match status" value="1"/>
</dbReference>
<dbReference type="PANTHER" id="PTHR10889">
    <property type="entry name" value="DEOXYRIBOSE-PHOSPHATE ALDOLASE"/>
    <property type="match status" value="1"/>
</dbReference>
<dbReference type="PANTHER" id="PTHR10889:SF1">
    <property type="entry name" value="DEOXYRIBOSE-PHOSPHATE ALDOLASE"/>
    <property type="match status" value="1"/>
</dbReference>
<dbReference type="Pfam" id="PF01791">
    <property type="entry name" value="DeoC"/>
    <property type="match status" value="1"/>
</dbReference>
<dbReference type="PIRSF" id="PIRSF001357">
    <property type="entry name" value="DeoC"/>
    <property type="match status" value="1"/>
</dbReference>
<dbReference type="SMART" id="SM01133">
    <property type="entry name" value="DeoC"/>
    <property type="match status" value="1"/>
</dbReference>
<dbReference type="SUPFAM" id="SSF51569">
    <property type="entry name" value="Aldolase"/>
    <property type="match status" value="1"/>
</dbReference>